<reference key="1">
    <citation type="journal article" date="2001" name="Science">
        <title>Complete genome sequence of a virulent isolate of Streptococcus pneumoniae.</title>
        <authorList>
            <person name="Tettelin H."/>
            <person name="Nelson K.E."/>
            <person name="Paulsen I.T."/>
            <person name="Eisen J.A."/>
            <person name="Read T.D."/>
            <person name="Peterson S.N."/>
            <person name="Heidelberg J.F."/>
            <person name="DeBoy R.T."/>
            <person name="Haft D.H."/>
            <person name="Dodson R.J."/>
            <person name="Durkin A.S."/>
            <person name="Gwinn M.L."/>
            <person name="Kolonay J.F."/>
            <person name="Nelson W.C."/>
            <person name="Peterson J.D."/>
            <person name="Umayam L.A."/>
            <person name="White O."/>
            <person name="Salzberg S.L."/>
            <person name="Lewis M.R."/>
            <person name="Radune D."/>
            <person name="Holtzapple E.K."/>
            <person name="Khouri H.M."/>
            <person name="Wolf A.M."/>
            <person name="Utterback T.R."/>
            <person name="Hansen C.L."/>
            <person name="McDonald L.A."/>
            <person name="Feldblyum T.V."/>
            <person name="Angiuoli S.V."/>
            <person name="Dickinson T."/>
            <person name="Hickey E.K."/>
            <person name="Holt I.E."/>
            <person name="Loftus B.J."/>
            <person name="Yang F."/>
            <person name="Smith H.O."/>
            <person name="Venter J.C."/>
            <person name="Dougherty B.A."/>
            <person name="Morrison D.A."/>
            <person name="Hollingshead S.K."/>
            <person name="Fraser C.M."/>
        </authorList>
    </citation>
    <scope>NUCLEOTIDE SEQUENCE [LARGE SCALE GENOMIC DNA]</scope>
    <source>
        <strain>ATCC BAA-334 / TIGR4</strain>
    </source>
</reference>
<protein>
    <recommendedName>
        <fullName evidence="1">Phosphate import ATP-binding protein PstB 2</fullName>
        <ecNumber evidence="1">7.3.2.1</ecNumber>
    </recommendedName>
    <alternativeName>
        <fullName evidence="1">ABC phosphate transporter 2</fullName>
    </alternativeName>
    <alternativeName>
        <fullName evidence="1">Phosphate-transporting ATPase 2</fullName>
    </alternativeName>
</protein>
<sequence>MSTYNWDEKHILTFPEEKVALSTKDVHVYYGKNESIKGIDMQFERNKITALIGPSGSGKSTYLRSLNRMNDTIDIAKVTGQILYRGIDVNRPEINVYEMRKHIGMVFQRPNPFAKSIYRNITFAHERAGVKDKQVLDEIVETSLRQAALWDQVKDDLHKSALTLSGGQQQRLCIARAISVKPDILLMDEPASALDPIATMQLEETMFELKKNFTIIIVTHNMQQAARASDYTGFFYLGDLIEYDKTATIFQNAKLQSTNDYVSGHFG</sequence>
<dbReference type="EC" id="7.3.2.1" evidence="1"/>
<dbReference type="EMBL" id="AE005672">
    <property type="protein sequence ID" value="AAK75495.1"/>
    <property type="molecule type" value="Genomic_DNA"/>
</dbReference>
<dbReference type="PIR" id="F95162">
    <property type="entry name" value="F95162"/>
</dbReference>
<dbReference type="SMR" id="Q97Q34"/>
<dbReference type="PaxDb" id="170187-SP_1397"/>
<dbReference type="EnsemblBacteria" id="AAK75495">
    <property type="protein sequence ID" value="AAK75495"/>
    <property type="gene ID" value="SP_1397"/>
</dbReference>
<dbReference type="KEGG" id="spn:SP_1397"/>
<dbReference type="eggNOG" id="COG1117">
    <property type="taxonomic scope" value="Bacteria"/>
</dbReference>
<dbReference type="PhylomeDB" id="Q97Q34"/>
<dbReference type="BioCyc" id="SPNE170187:G1FZB-1406-MONOMER"/>
<dbReference type="Proteomes" id="UP000000585">
    <property type="component" value="Chromosome"/>
</dbReference>
<dbReference type="GO" id="GO:0005886">
    <property type="term" value="C:plasma membrane"/>
    <property type="evidence" value="ECO:0007669"/>
    <property type="project" value="UniProtKB-SubCell"/>
</dbReference>
<dbReference type="GO" id="GO:0005524">
    <property type="term" value="F:ATP binding"/>
    <property type="evidence" value="ECO:0007669"/>
    <property type="project" value="UniProtKB-KW"/>
</dbReference>
<dbReference type="GO" id="GO:0016887">
    <property type="term" value="F:ATP hydrolysis activity"/>
    <property type="evidence" value="ECO:0007669"/>
    <property type="project" value="InterPro"/>
</dbReference>
<dbReference type="GO" id="GO:0015415">
    <property type="term" value="F:ATPase-coupled phosphate ion transmembrane transporter activity"/>
    <property type="evidence" value="ECO:0007669"/>
    <property type="project" value="UniProtKB-EC"/>
</dbReference>
<dbReference type="GO" id="GO:0035435">
    <property type="term" value="P:phosphate ion transmembrane transport"/>
    <property type="evidence" value="ECO:0007669"/>
    <property type="project" value="InterPro"/>
</dbReference>
<dbReference type="CDD" id="cd03260">
    <property type="entry name" value="ABC_PstB_phosphate_transporter"/>
    <property type="match status" value="1"/>
</dbReference>
<dbReference type="Gene3D" id="3.40.50.300">
    <property type="entry name" value="P-loop containing nucleotide triphosphate hydrolases"/>
    <property type="match status" value="1"/>
</dbReference>
<dbReference type="InterPro" id="IPR003593">
    <property type="entry name" value="AAA+_ATPase"/>
</dbReference>
<dbReference type="InterPro" id="IPR003439">
    <property type="entry name" value="ABC_transporter-like_ATP-bd"/>
</dbReference>
<dbReference type="InterPro" id="IPR017871">
    <property type="entry name" value="ABC_transporter-like_CS"/>
</dbReference>
<dbReference type="InterPro" id="IPR027417">
    <property type="entry name" value="P-loop_NTPase"/>
</dbReference>
<dbReference type="InterPro" id="IPR005670">
    <property type="entry name" value="PstB-like"/>
</dbReference>
<dbReference type="NCBIfam" id="TIGR00972">
    <property type="entry name" value="3a0107s01c2"/>
    <property type="match status" value="1"/>
</dbReference>
<dbReference type="PANTHER" id="PTHR43423">
    <property type="entry name" value="ABC TRANSPORTER I FAMILY MEMBER 17"/>
    <property type="match status" value="1"/>
</dbReference>
<dbReference type="PANTHER" id="PTHR43423:SF10">
    <property type="entry name" value="PHOSPHATE IMPORT ATP-BINDING PROTEIN PSTB 2"/>
    <property type="match status" value="1"/>
</dbReference>
<dbReference type="Pfam" id="PF00005">
    <property type="entry name" value="ABC_tran"/>
    <property type="match status" value="1"/>
</dbReference>
<dbReference type="SMART" id="SM00382">
    <property type="entry name" value="AAA"/>
    <property type="match status" value="1"/>
</dbReference>
<dbReference type="SUPFAM" id="SSF52540">
    <property type="entry name" value="P-loop containing nucleoside triphosphate hydrolases"/>
    <property type="match status" value="1"/>
</dbReference>
<dbReference type="PROSITE" id="PS00211">
    <property type="entry name" value="ABC_TRANSPORTER_1"/>
    <property type="match status" value="1"/>
</dbReference>
<dbReference type="PROSITE" id="PS50893">
    <property type="entry name" value="ABC_TRANSPORTER_2"/>
    <property type="match status" value="1"/>
</dbReference>
<dbReference type="PROSITE" id="PS51238">
    <property type="entry name" value="PSTB"/>
    <property type="match status" value="1"/>
</dbReference>
<name>PSTB2_STRPN</name>
<gene>
    <name evidence="1" type="primary">pstB2</name>
    <name type="ordered locus">SP_1397</name>
</gene>
<keyword id="KW-0067">ATP-binding</keyword>
<keyword id="KW-1003">Cell membrane</keyword>
<keyword id="KW-0472">Membrane</keyword>
<keyword id="KW-0547">Nucleotide-binding</keyword>
<keyword id="KW-0592">Phosphate transport</keyword>
<keyword id="KW-1185">Reference proteome</keyword>
<keyword id="KW-1278">Translocase</keyword>
<keyword id="KW-0813">Transport</keyword>
<evidence type="ECO:0000255" key="1">
    <source>
        <dbReference type="HAMAP-Rule" id="MF_01702"/>
    </source>
</evidence>
<proteinExistence type="inferred from homology"/>
<comment type="function">
    <text evidence="1">Part of the ABC transporter complex PstSACB involved in phosphate import. Responsible for energy coupling to the transport system.</text>
</comment>
<comment type="catalytic activity">
    <reaction evidence="1">
        <text>phosphate(out) + ATP + H2O = ADP + 2 phosphate(in) + H(+)</text>
        <dbReference type="Rhea" id="RHEA:24440"/>
        <dbReference type="ChEBI" id="CHEBI:15377"/>
        <dbReference type="ChEBI" id="CHEBI:15378"/>
        <dbReference type="ChEBI" id="CHEBI:30616"/>
        <dbReference type="ChEBI" id="CHEBI:43474"/>
        <dbReference type="ChEBI" id="CHEBI:456216"/>
        <dbReference type="EC" id="7.3.2.1"/>
    </reaction>
</comment>
<comment type="subunit">
    <text evidence="1">The complex is composed of two ATP-binding proteins (PstB), two transmembrane proteins (PstC and PstA) and a solute-binding protein (PstS).</text>
</comment>
<comment type="subcellular location">
    <subcellularLocation>
        <location evidence="1">Cell membrane</location>
        <topology evidence="1">Peripheral membrane protein</topology>
    </subcellularLocation>
</comment>
<comment type="similarity">
    <text evidence="1">Belongs to the ABC transporter superfamily. Phosphate importer (TC 3.A.1.7) family.</text>
</comment>
<organism>
    <name type="scientific">Streptococcus pneumoniae serotype 4 (strain ATCC BAA-334 / TIGR4)</name>
    <dbReference type="NCBI Taxonomy" id="170187"/>
    <lineage>
        <taxon>Bacteria</taxon>
        <taxon>Bacillati</taxon>
        <taxon>Bacillota</taxon>
        <taxon>Bacilli</taxon>
        <taxon>Lactobacillales</taxon>
        <taxon>Streptococcaceae</taxon>
        <taxon>Streptococcus</taxon>
    </lineage>
</organism>
<accession>Q97Q34</accession>
<feature type="chain" id="PRO_0000092898" description="Phosphate import ATP-binding protein PstB 2">
    <location>
        <begin position="1"/>
        <end position="267"/>
    </location>
</feature>
<feature type="domain" description="ABC transporter" evidence="1">
    <location>
        <begin position="21"/>
        <end position="262"/>
    </location>
</feature>
<feature type="binding site" evidence="1">
    <location>
        <begin position="53"/>
        <end position="60"/>
    </location>
    <ligand>
        <name>ATP</name>
        <dbReference type="ChEBI" id="CHEBI:30616"/>
    </ligand>
</feature>